<name>RRP41_THEKO</name>
<organism>
    <name type="scientific">Thermococcus kodakarensis (strain ATCC BAA-918 / JCM 12380 / KOD1)</name>
    <name type="common">Pyrococcus kodakaraensis (strain KOD1)</name>
    <dbReference type="NCBI Taxonomy" id="69014"/>
    <lineage>
        <taxon>Archaea</taxon>
        <taxon>Methanobacteriati</taxon>
        <taxon>Methanobacteriota</taxon>
        <taxon>Thermococci</taxon>
        <taxon>Thermococcales</taxon>
        <taxon>Thermococcaceae</taxon>
        <taxon>Thermococcus</taxon>
    </lineage>
</organism>
<comment type="function">
    <text evidence="1">Catalytic component of the exosome, which is a complex involved in RNA degradation. Has 3'-&gt;5' exoribonuclease activity. Can also synthesize heteromeric RNA-tails.</text>
</comment>
<comment type="subunit">
    <text evidence="1">Component of the archaeal exosome complex. Forms a hexameric ring-like arrangement composed of 3 Rrp41-Rrp42 heterodimers. The hexameric ring associates with a trimer of Rrp4 and/or Csl4 subunits.</text>
</comment>
<comment type="subcellular location">
    <subcellularLocation>
        <location evidence="1">Cytoplasm</location>
    </subcellularLocation>
</comment>
<comment type="similarity">
    <text evidence="1">Belongs to the RNase PH family. Rrp41 subfamily.</text>
</comment>
<dbReference type="EC" id="3.1.13.-" evidence="1"/>
<dbReference type="EMBL" id="AP006878">
    <property type="protein sequence ID" value="BAD85823.1"/>
    <property type="molecule type" value="Genomic_DNA"/>
</dbReference>
<dbReference type="RefSeq" id="WP_011250585.1">
    <property type="nucleotide sequence ID" value="NC_006624.1"/>
</dbReference>
<dbReference type="SMR" id="Q5JIR6"/>
<dbReference type="STRING" id="69014.TK1634"/>
<dbReference type="EnsemblBacteria" id="BAD85823">
    <property type="protein sequence ID" value="BAD85823"/>
    <property type="gene ID" value="TK1634"/>
</dbReference>
<dbReference type="GeneID" id="78448162"/>
<dbReference type="KEGG" id="tko:TK1634"/>
<dbReference type="PATRIC" id="fig|69014.16.peg.1593"/>
<dbReference type="eggNOG" id="arCOG01575">
    <property type="taxonomic scope" value="Archaea"/>
</dbReference>
<dbReference type="HOGENOM" id="CLU_063514_0_0_2"/>
<dbReference type="InParanoid" id="Q5JIR6"/>
<dbReference type="OrthoDB" id="24266at2157"/>
<dbReference type="PhylomeDB" id="Q5JIR6"/>
<dbReference type="Proteomes" id="UP000000536">
    <property type="component" value="Chromosome"/>
</dbReference>
<dbReference type="GO" id="GO:0000177">
    <property type="term" value="C:cytoplasmic exosome (RNase complex)"/>
    <property type="evidence" value="ECO:0000318"/>
    <property type="project" value="GO_Central"/>
</dbReference>
<dbReference type="GO" id="GO:0000175">
    <property type="term" value="F:3'-5'-RNA exonuclease activity"/>
    <property type="evidence" value="ECO:0007669"/>
    <property type="project" value="UniProtKB-UniRule"/>
</dbReference>
<dbReference type="GO" id="GO:0003723">
    <property type="term" value="F:RNA binding"/>
    <property type="evidence" value="ECO:0000318"/>
    <property type="project" value="GO_Central"/>
</dbReference>
<dbReference type="GO" id="GO:0010467">
    <property type="term" value="P:gene expression"/>
    <property type="evidence" value="ECO:0007669"/>
    <property type="project" value="UniProtKB-ARBA"/>
</dbReference>
<dbReference type="GO" id="GO:0016075">
    <property type="term" value="P:rRNA catabolic process"/>
    <property type="evidence" value="ECO:0000318"/>
    <property type="project" value="GO_Central"/>
</dbReference>
<dbReference type="CDD" id="cd11366">
    <property type="entry name" value="RNase_PH_archRRP41"/>
    <property type="match status" value="1"/>
</dbReference>
<dbReference type="FunFam" id="3.30.230.70:FF:000004">
    <property type="entry name" value="Exosome complex component Rrp41"/>
    <property type="match status" value="1"/>
</dbReference>
<dbReference type="Gene3D" id="3.30.230.70">
    <property type="entry name" value="GHMP Kinase, N-terminal domain"/>
    <property type="match status" value="1"/>
</dbReference>
<dbReference type="HAMAP" id="MF_00591">
    <property type="entry name" value="Exosome_Rrp41"/>
    <property type="match status" value="1"/>
</dbReference>
<dbReference type="InterPro" id="IPR001247">
    <property type="entry name" value="ExoRNase_PH_dom1"/>
</dbReference>
<dbReference type="InterPro" id="IPR015847">
    <property type="entry name" value="ExoRNase_PH_dom2"/>
</dbReference>
<dbReference type="InterPro" id="IPR036345">
    <property type="entry name" value="ExoRNase_PH_dom2_sf"/>
</dbReference>
<dbReference type="InterPro" id="IPR027408">
    <property type="entry name" value="PNPase/RNase_PH_dom_sf"/>
</dbReference>
<dbReference type="InterPro" id="IPR020568">
    <property type="entry name" value="Ribosomal_Su5_D2-typ_SF"/>
</dbReference>
<dbReference type="InterPro" id="IPR050080">
    <property type="entry name" value="RNase_PH"/>
</dbReference>
<dbReference type="InterPro" id="IPR011807">
    <property type="entry name" value="Rrp41"/>
</dbReference>
<dbReference type="NCBIfam" id="TIGR02065">
    <property type="entry name" value="ECX1"/>
    <property type="match status" value="1"/>
</dbReference>
<dbReference type="PANTHER" id="PTHR11953">
    <property type="entry name" value="EXOSOME COMPLEX COMPONENT"/>
    <property type="match status" value="1"/>
</dbReference>
<dbReference type="PANTHER" id="PTHR11953:SF0">
    <property type="entry name" value="EXOSOME COMPLEX COMPONENT RRP41"/>
    <property type="match status" value="1"/>
</dbReference>
<dbReference type="Pfam" id="PF01138">
    <property type="entry name" value="RNase_PH"/>
    <property type="match status" value="1"/>
</dbReference>
<dbReference type="Pfam" id="PF03725">
    <property type="entry name" value="RNase_PH_C"/>
    <property type="match status" value="1"/>
</dbReference>
<dbReference type="SUPFAM" id="SSF55666">
    <property type="entry name" value="Ribonuclease PH domain 2-like"/>
    <property type="match status" value="1"/>
</dbReference>
<dbReference type="SUPFAM" id="SSF54211">
    <property type="entry name" value="Ribosomal protein S5 domain 2-like"/>
    <property type="match status" value="1"/>
</dbReference>
<protein>
    <recommendedName>
        <fullName evidence="1">Exosome complex component Rrp41</fullName>
        <ecNumber evidence="1">3.1.13.-</ecNumber>
    </recommendedName>
</protein>
<reference key="1">
    <citation type="journal article" date="2005" name="Genome Res.">
        <title>Complete genome sequence of the hyperthermophilic archaeon Thermococcus kodakaraensis KOD1 and comparison with Pyrococcus genomes.</title>
        <authorList>
            <person name="Fukui T."/>
            <person name="Atomi H."/>
            <person name="Kanai T."/>
            <person name="Matsumi R."/>
            <person name="Fujiwara S."/>
            <person name="Imanaka T."/>
        </authorList>
    </citation>
    <scope>NUCLEOTIDE SEQUENCE [LARGE SCALE GENOMIC DNA]</scope>
    <source>
        <strain>ATCC BAA-918 / JCM 12380 / KOD1</strain>
    </source>
</reference>
<sequence length="249" mass="27628">MMGRPEGLKLIDENGKRIDGRKKYELRPIKMEVGVLKNADGSAYVEWGKNKVLAAVYGPREIHPKHLQRPDRAILRVRYNMAPFSVEERKKPGPDRRSVEISKVIRGALEPALLLHMFPRTAIDVFIEILQADAGTRVAGITAASLALADAGIPMKDLVAACAAGKIDGEIVLDLNKEEDNYGEADVPVAIMPLKNDITLLQMDGYLTKDEFLEAVRLAIKGAKAVYQKQREALKEKYLKIAQEVEGNE</sequence>
<proteinExistence type="inferred from homology"/>
<keyword id="KW-0963">Cytoplasm</keyword>
<keyword id="KW-0269">Exonuclease</keyword>
<keyword id="KW-0271">Exosome</keyword>
<keyword id="KW-0378">Hydrolase</keyword>
<keyword id="KW-0540">Nuclease</keyword>
<keyword id="KW-1185">Reference proteome</keyword>
<evidence type="ECO:0000255" key="1">
    <source>
        <dbReference type="HAMAP-Rule" id="MF_00591"/>
    </source>
</evidence>
<gene>
    <name evidence="1" type="primary">rrp41</name>
    <name type="ordered locus">TK1634</name>
</gene>
<accession>Q5JIR6</accession>
<feature type="chain" id="PRO_0000139989" description="Exosome complex component Rrp41">
    <location>
        <begin position="1"/>
        <end position="249"/>
    </location>
</feature>